<accession>P32017</accession>
<evidence type="ECO:0000250" key="1"/>
<evidence type="ECO:0000255" key="2"/>
<evidence type="ECO:0000256" key="3">
    <source>
        <dbReference type="SAM" id="MobiDB-lite"/>
    </source>
</evidence>
<evidence type="ECO:0000305" key="4"/>
<organism>
    <name type="scientific">Gallus gallus</name>
    <name type="common">Chicken</name>
    <dbReference type="NCBI Taxonomy" id="9031"/>
    <lineage>
        <taxon>Eukaryota</taxon>
        <taxon>Metazoa</taxon>
        <taxon>Chordata</taxon>
        <taxon>Craniata</taxon>
        <taxon>Vertebrata</taxon>
        <taxon>Euteleostomi</taxon>
        <taxon>Archelosauria</taxon>
        <taxon>Archosauria</taxon>
        <taxon>Dinosauria</taxon>
        <taxon>Saurischia</taxon>
        <taxon>Theropoda</taxon>
        <taxon>Coelurosauria</taxon>
        <taxon>Aves</taxon>
        <taxon>Neognathae</taxon>
        <taxon>Galloanserae</taxon>
        <taxon>Galliformes</taxon>
        <taxon>Phasianidae</taxon>
        <taxon>Phasianinae</taxon>
        <taxon>Gallus</taxon>
    </lineage>
</organism>
<keyword id="KW-0176">Collagen</keyword>
<keyword id="KW-0272">Extracellular matrix</keyword>
<keyword id="KW-0325">Glycoprotein</keyword>
<keyword id="KW-0379">Hydroxylation</keyword>
<keyword id="KW-1185">Reference proteome</keyword>
<keyword id="KW-0677">Repeat</keyword>
<keyword id="KW-0964">Secreted</keyword>
<keyword id="KW-0732">Signal</keyword>
<name>CO9A3_CHICK</name>
<dbReference type="EMBL" id="M83179">
    <property type="protein sequence ID" value="AAB59960.1"/>
    <property type="molecule type" value="mRNA"/>
</dbReference>
<dbReference type="SMR" id="P32017"/>
<dbReference type="ComplexPortal" id="CPX-4104">
    <property type="entry name" value="Collagen type IX trimer"/>
</dbReference>
<dbReference type="FunCoup" id="P32017">
    <property type="interactions" value="2"/>
</dbReference>
<dbReference type="STRING" id="9031.ENSGALP00000057178"/>
<dbReference type="GlyCosmos" id="P32017">
    <property type="glycosylation" value="1 site, No reported glycans"/>
</dbReference>
<dbReference type="GlyGen" id="P32017">
    <property type="glycosylation" value="3 sites"/>
</dbReference>
<dbReference type="PaxDb" id="9031-ENSGALP00000009015"/>
<dbReference type="VEuPathDB" id="HostDB:geneid_396242"/>
<dbReference type="eggNOG" id="KOG3544">
    <property type="taxonomic scope" value="Eukaryota"/>
</dbReference>
<dbReference type="InParanoid" id="P32017"/>
<dbReference type="OrthoDB" id="9451878at2759"/>
<dbReference type="PhylomeDB" id="P32017"/>
<dbReference type="Proteomes" id="UP000000539">
    <property type="component" value="Unassembled WGS sequence"/>
</dbReference>
<dbReference type="GO" id="GO:0005604">
    <property type="term" value="C:basement membrane"/>
    <property type="evidence" value="ECO:0000318"/>
    <property type="project" value="GO_Central"/>
</dbReference>
<dbReference type="GO" id="GO:0005594">
    <property type="term" value="C:collagen type IX trimer"/>
    <property type="evidence" value="ECO:0000318"/>
    <property type="project" value="GO_Central"/>
</dbReference>
<dbReference type="GO" id="GO:0005615">
    <property type="term" value="C:extracellular space"/>
    <property type="evidence" value="ECO:0000318"/>
    <property type="project" value="GO_Central"/>
</dbReference>
<dbReference type="GO" id="GO:0030020">
    <property type="term" value="F:extracellular matrix structural constituent conferring tensile strength"/>
    <property type="evidence" value="ECO:0000318"/>
    <property type="project" value="GO_Central"/>
</dbReference>
<dbReference type="InterPro" id="IPR008160">
    <property type="entry name" value="Collagen"/>
</dbReference>
<dbReference type="InterPro" id="IPR050938">
    <property type="entry name" value="Collagen_Structural_Proteins"/>
</dbReference>
<dbReference type="PANTHER" id="PTHR37456:SF5">
    <property type="entry name" value="COLLAGEN TYPE XIII ALPHA 1 CHAIN"/>
    <property type="match status" value="1"/>
</dbReference>
<dbReference type="PANTHER" id="PTHR37456">
    <property type="entry name" value="SI:CH211-266K2.1"/>
    <property type="match status" value="1"/>
</dbReference>
<dbReference type="Pfam" id="PF01391">
    <property type="entry name" value="Collagen"/>
    <property type="match status" value="8"/>
</dbReference>
<feature type="signal peptide">
    <location>
        <begin position="1"/>
        <end position="21"/>
    </location>
</feature>
<feature type="chain" id="PRO_0000005849" description="Collagen alpha-3(IX) chain">
    <location>
        <begin position="22"/>
        <end position="675"/>
    </location>
</feature>
<feature type="region of interest" description="Disordered" evidence="3">
    <location>
        <begin position="22"/>
        <end position="517"/>
    </location>
</feature>
<feature type="region of interest" description="Triple-helical region 3 (COL3)">
    <location>
        <begin position="25"/>
        <end position="515"/>
    </location>
</feature>
<feature type="region of interest" description="Nonhelical region 3 (NC3)">
    <location>
        <begin position="516"/>
        <end position="546"/>
    </location>
</feature>
<feature type="region of interest" description="Disordered" evidence="3">
    <location>
        <begin position="542"/>
        <end position="660"/>
    </location>
</feature>
<feature type="region of interest" description="Triple-helical region 2 (COL2)">
    <location>
        <begin position="547"/>
        <end position="626"/>
    </location>
</feature>
<feature type="region of interest" description="Nonhelical region 2 (NC2)">
    <location>
        <begin position="627"/>
        <end position="631"/>
    </location>
</feature>
<feature type="region of interest" description="Triple-helical region 1 (COL1)">
    <location>
        <begin position="632"/>
        <end position="658"/>
    </location>
</feature>
<feature type="region of interest" description="Nonhelical region 1 (NC1)">
    <location>
        <begin position="659"/>
        <end position="675"/>
    </location>
</feature>
<feature type="short sequence motif" description="Cell attachment site" evidence="2">
    <location>
        <begin position="242"/>
        <end position="244"/>
    </location>
</feature>
<feature type="short sequence motif" description="Cell attachment site" evidence="2">
    <location>
        <begin position="591"/>
        <end position="593"/>
    </location>
</feature>
<feature type="compositionally biased region" description="Pro residues" evidence="3">
    <location>
        <begin position="27"/>
        <end position="38"/>
    </location>
</feature>
<feature type="compositionally biased region" description="Pro residues" evidence="3">
    <location>
        <begin position="51"/>
        <end position="60"/>
    </location>
</feature>
<feature type="compositionally biased region" description="Low complexity" evidence="3">
    <location>
        <begin position="62"/>
        <end position="87"/>
    </location>
</feature>
<feature type="compositionally biased region" description="Pro residues" evidence="3">
    <location>
        <begin position="105"/>
        <end position="125"/>
    </location>
</feature>
<feature type="compositionally biased region" description="Gly residues" evidence="3">
    <location>
        <begin position="126"/>
        <end position="135"/>
    </location>
</feature>
<feature type="compositionally biased region" description="Pro residues" evidence="3">
    <location>
        <begin position="136"/>
        <end position="155"/>
    </location>
</feature>
<feature type="compositionally biased region" description="Pro residues" evidence="3">
    <location>
        <begin position="173"/>
        <end position="184"/>
    </location>
</feature>
<feature type="compositionally biased region" description="Low complexity" evidence="3">
    <location>
        <begin position="218"/>
        <end position="233"/>
    </location>
</feature>
<feature type="compositionally biased region" description="Basic and acidic residues" evidence="3">
    <location>
        <begin position="301"/>
        <end position="317"/>
    </location>
</feature>
<feature type="compositionally biased region" description="Low complexity" evidence="3">
    <location>
        <begin position="361"/>
        <end position="374"/>
    </location>
</feature>
<feature type="compositionally biased region" description="Low complexity" evidence="3">
    <location>
        <begin position="481"/>
        <end position="508"/>
    </location>
</feature>
<feature type="compositionally biased region" description="Low complexity" evidence="3">
    <location>
        <begin position="569"/>
        <end position="582"/>
    </location>
</feature>
<feature type="compositionally biased region" description="Low complexity" evidence="3">
    <location>
        <begin position="613"/>
        <end position="624"/>
    </location>
</feature>
<feature type="glycosylation site" description="N-linked (GlcNAc...) asparagine" evidence="2">
    <location>
        <position position="479"/>
    </location>
</feature>
<comment type="function">
    <text>Collagen type IX is a minor cartilage non-fibrillar collagen. It is associated with type II collagen fibrils.</text>
</comment>
<comment type="subunit">
    <text>Trimers composed of three different chains: alpha 1(IX), alpha 2(IX), and alpha 3(IX).</text>
</comment>
<comment type="subcellular location">
    <subcellularLocation>
        <location evidence="1">Secreted</location>
        <location evidence="1">Extracellular space</location>
        <location evidence="1">Extracellular matrix</location>
    </subcellularLocation>
</comment>
<comment type="PTM">
    <text>Prolines at the third position of the tripeptide repeating unit (G-X-Y) are hydroxylated in some or all of the chains.</text>
</comment>
<comment type="similarity">
    <text evidence="4">Belongs to the fibril-associated collagens with interrupted helices (FACIT) family.</text>
</comment>
<protein>
    <recommendedName>
        <fullName>Collagen alpha-3(IX) chain</fullName>
    </recommendedName>
</protein>
<sequence length="675" mass="63013">MTVFPTLGLLFLCQLLATTSAQRVGPQGPPGPRGPPGPSGKDGIDGEPGPSGLPGPPGPKGAPGKPGAAGEAGLPGLPGVDGLTGTDGPPGPNGPPGDRGALGPAGPPGPAGKGLPGPPGPPGPSGLPGGNGFRGPPGPSGLPGFPGPPGPPGPPGLAGIIPEGGGDLQCPALCPPGPPGPPGMPGFKGHTGHKGGPGEIGKEGEKGSPGPPGPPGIPGSVGLQGPRGLRGLPGPMGPAGDRGDIGFRGPPGIPGPPGRAGDQGNKGPQGFRGPKGDTGRPGPKGNPGARGLIGEPGIPGKDGRDGAPGLDGEKGDAARMGVPGEKGPNGLPGLPGRAGIKGSKGEPGSPGEMGEAGPSGEPGIPGDVGIPGDRGLPGPRGATGPVGLPGPIGAPGVRGFQGPKGSSGEPGLPGPTGIRGESGDRGPAGVIGAKGSQGIAGADGLPGDKGELGPFGPPGQKGEPGKRGELGPKGAQGPNGTAGAPGIPGHPGPMGHQGEQGVPGITGKPGPPGKEASEQHIRELCGEMINDQIAQLAANLRKPLSPGMTGRPGPAGPPGPPGATGSVGHPGARGPPGYRGPTGELGDPGPRGDTGEKGDKGPAGQGIDGPDGDQGPQGLPGVPGISKNGRDGAQGEPGLPGDPGTPGAVGAQGTPGICDTSACMGAVGASTSKKS</sequence>
<proteinExistence type="evidence at transcript level"/>
<reference key="1">
    <citation type="journal article" date="1992" name="J. Biol. Chem.">
        <title>Cloning and developmental expression of the alpha 3 chain of chicken type IX collagen.</title>
        <authorList>
            <person name="Har-El R."/>
            <person name="Sharma Y.D."/>
            <person name="Aguilera A."/>
            <person name="Ueyama N."/>
            <person name="Wu J.J."/>
            <person name="Eyre D.R."/>
            <person name="Juricic L."/>
            <person name="Chandrasekaran S."/>
            <person name="Li M."/>
            <person name="Nah H.D."/>
            <person name="Upholt W.B."/>
            <person name="Tanzer M.L."/>
        </authorList>
    </citation>
    <scope>NUCLEOTIDE SEQUENCE [MRNA]</scope>
</reference>
<gene>
    <name type="primary">COL9A3</name>
</gene>